<organism>
    <name type="scientific">Shewanella halifaxensis (strain HAW-EB4)</name>
    <dbReference type="NCBI Taxonomy" id="458817"/>
    <lineage>
        <taxon>Bacteria</taxon>
        <taxon>Pseudomonadati</taxon>
        <taxon>Pseudomonadota</taxon>
        <taxon>Gammaproteobacteria</taxon>
        <taxon>Alteromonadales</taxon>
        <taxon>Shewanellaceae</taxon>
        <taxon>Shewanella</taxon>
    </lineage>
</organism>
<gene>
    <name evidence="1" type="primary">nqrD</name>
    <name type="ordered locus">Shal_3184</name>
</gene>
<accession>B0TR00</accession>
<feature type="chain" id="PRO_1000080568" description="Na(+)-translocating NADH-quinone reductase subunit D">
    <location>
        <begin position="1"/>
        <end position="210"/>
    </location>
</feature>
<feature type="transmembrane region" description="Helical" evidence="1">
    <location>
        <begin position="14"/>
        <end position="34"/>
    </location>
</feature>
<feature type="transmembrane region" description="Helical" evidence="1">
    <location>
        <begin position="42"/>
        <end position="62"/>
    </location>
</feature>
<feature type="transmembrane region" description="Helical" evidence="1">
    <location>
        <begin position="72"/>
        <end position="92"/>
    </location>
</feature>
<feature type="transmembrane region" description="Helical" evidence="1">
    <location>
        <begin position="103"/>
        <end position="123"/>
    </location>
</feature>
<feature type="transmembrane region" description="Helical" evidence="1">
    <location>
        <begin position="131"/>
        <end position="151"/>
    </location>
</feature>
<feature type="transmembrane region" description="Helical" evidence="1">
    <location>
        <begin position="178"/>
        <end position="198"/>
    </location>
</feature>
<reference key="1">
    <citation type="submission" date="2008-01" db="EMBL/GenBank/DDBJ databases">
        <title>Complete sequence of Shewanella halifaxensis HAW-EB4.</title>
        <authorList>
            <consortium name="US DOE Joint Genome Institute"/>
            <person name="Copeland A."/>
            <person name="Lucas S."/>
            <person name="Lapidus A."/>
            <person name="Glavina del Rio T."/>
            <person name="Dalin E."/>
            <person name="Tice H."/>
            <person name="Bruce D."/>
            <person name="Goodwin L."/>
            <person name="Pitluck S."/>
            <person name="Sims D."/>
            <person name="Brettin T."/>
            <person name="Detter J.C."/>
            <person name="Han C."/>
            <person name="Kuske C.R."/>
            <person name="Schmutz J."/>
            <person name="Larimer F."/>
            <person name="Land M."/>
            <person name="Hauser L."/>
            <person name="Kyrpides N."/>
            <person name="Kim E."/>
            <person name="Zhao J.-S."/>
            <person name="Richardson P."/>
        </authorList>
    </citation>
    <scope>NUCLEOTIDE SEQUENCE [LARGE SCALE GENOMIC DNA]</scope>
    <source>
        <strain>HAW-EB4</strain>
    </source>
</reference>
<comment type="function">
    <text evidence="1">NQR complex catalyzes the reduction of ubiquinone-1 to ubiquinol by two successive reactions, coupled with the transport of Na(+) ions from the cytoplasm to the periplasm. NqrA to NqrE are probably involved in the second step, the conversion of ubisemiquinone to ubiquinol.</text>
</comment>
<comment type="catalytic activity">
    <reaction evidence="1">
        <text>a ubiquinone + n Na(+)(in) + NADH + H(+) = a ubiquinol + n Na(+)(out) + NAD(+)</text>
        <dbReference type="Rhea" id="RHEA:47748"/>
        <dbReference type="Rhea" id="RHEA-COMP:9565"/>
        <dbReference type="Rhea" id="RHEA-COMP:9566"/>
        <dbReference type="ChEBI" id="CHEBI:15378"/>
        <dbReference type="ChEBI" id="CHEBI:16389"/>
        <dbReference type="ChEBI" id="CHEBI:17976"/>
        <dbReference type="ChEBI" id="CHEBI:29101"/>
        <dbReference type="ChEBI" id="CHEBI:57540"/>
        <dbReference type="ChEBI" id="CHEBI:57945"/>
        <dbReference type="EC" id="7.2.1.1"/>
    </reaction>
</comment>
<comment type="subunit">
    <text evidence="1">Composed of six subunits; NqrA, NqrB, NqrC, NqrD, NqrE and NqrF.</text>
</comment>
<comment type="subcellular location">
    <subcellularLocation>
        <location evidence="1">Cell inner membrane</location>
        <topology evidence="1">Multi-pass membrane protein</topology>
    </subcellularLocation>
</comment>
<comment type="similarity">
    <text evidence="1">Belongs to the NqrDE/RnfAE family.</text>
</comment>
<dbReference type="EC" id="7.2.1.1" evidence="1"/>
<dbReference type="EMBL" id="CP000931">
    <property type="protein sequence ID" value="ABZ77731.1"/>
    <property type="molecule type" value="Genomic_DNA"/>
</dbReference>
<dbReference type="RefSeq" id="WP_012278254.1">
    <property type="nucleotide sequence ID" value="NC_010334.1"/>
</dbReference>
<dbReference type="SMR" id="B0TR00"/>
<dbReference type="STRING" id="458817.Shal_3184"/>
<dbReference type="KEGG" id="shl:Shal_3184"/>
<dbReference type="eggNOG" id="COG1347">
    <property type="taxonomic scope" value="Bacteria"/>
</dbReference>
<dbReference type="HOGENOM" id="CLU_046659_1_1_6"/>
<dbReference type="OrthoDB" id="9782945at2"/>
<dbReference type="Proteomes" id="UP000001317">
    <property type="component" value="Chromosome"/>
</dbReference>
<dbReference type="GO" id="GO:0005886">
    <property type="term" value="C:plasma membrane"/>
    <property type="evidence" value="ECO:0007669"/>
    <property type="project" value="UniProtKB-SubCell"/>
</dbReference>
<dbReference type="GO" id="GO:0016655">
    <property type="term" value="F:oxidoreductase activity, acting on NAD(P)H, quinone or similar compound as acceptor"/>
    <property type="evidence" value="ECO:0007669"/>
    <property type="project" value="UniProtKB-UniRule"/>
</dbReference>
<dbReference type="GO" id="GO:0006814">
    <property type="term" value="P:sodium ion transport"/>
    <property type="evidence" value="ECO:0007669"/>
    <property type="project" value="UniProtKB-UniRule"/>
</dbReference>
<dbReference type="HAMAP" id="MF_00428">
    <property type="entry name" value="NqrD"/>
    <property type="match status" value="1"/>
</dbReference>
<dbReference type="InterPro" id="IPR011292">
    <property type="entry name" value="NqrD"/>
</dbReference>
<dbReference type="InterPro" id="IPR003667">
    <property type="entry name" value="NqrDE/RnfAE"/>
</dbReference>
<dbReference type="NCBIfam" id="TIGR01939">
    <property type="entry name" value="nqrD"/>
    <property type="match status" value="1"/>
</dbReference>
<dbReference type="NCBIfam" id="NF006777">
    <property type="entry name" value="PRK09292.1"/>
    <property type="match status" value="1"/>
</dbReference>
<dbReference type="NCBIfam" id="NF009070">
    <property type="entry name" value="PRK12405.1"/>
    <property type="match status" value="1"/>
</dbReference>
<dbReference type="PANTHER" id="PTHR30586">
    <property type="entry name" value="ELECTRON TRANSPORT COMPLEX PROTEIN RNFE"/>
    <property type="match status" value="1"/>
</dbReference>
<dbReference type="PANTHER" id="PTHR30586:SF1">
    <property type="entry name" value="NA(+)-TRANSLOCATING NADH-QUINONE REDUCTASE SUBUNIT D"/>
    <property type="match status" value="1"/>
</dbReference>
<dbReference type="Pfam" id="PF02508">
    <property type="entry name" value="Rnf-Nqr"/>
    <property type="match status" value="1"/>
</dbReference>
<dbReference type="PIRSF" id="PIRSF006102">
    <property type="entry name" value="NQR_DE"/>
    <property type="match status" value="1"/>
</dbReference>
<protein>
    <recommendedName>
        <fullName evidence="1">Na(+)-translocating NADH-quinone reductase subunit D</fullName>
        <shortName evidence="1">Na(+)-NQR subunit D</shortName>
        <shortName evidence="1">Na(+)-translocating NQR subunit D</shortName>
        <ecNumber evidence="1">7.2.1.1</ecNumber>
    </recommendedName>
    <alternativeName>
        <fullName evidence="1">NQR complex subunit D</fullName>
    </alternativeName>
    <alternativeName>
        <fullName evidence="1">NQR-1 subunit D</fullName>
    </alternativeName>
</protein>
<name>NQRD_SHEHH</name>
<sequence>MANAKELKQVLTGPIVSNNPIALQVLGVCSALAVTSKMETALVMTIALTVVCAFSNLFISILRNHIPSSVRIIVQMTIIASLVIVVDQVLQAYAYDVAKQLSVFVGLIITNCIVMGRAEAYAMKTPPMMSFMDGIGNGIGYGAILLSVGFIRELFGNGSLFGVEILSKVSDGGWYQPNGLLLLPPSAFFLIGMLIWIIRTYKPEQVEAKG</sequence>
<evidence type="ECO:0000255" key="1">
    <source>
        <dbReference type="HAMAP-Rule" id="MF_00428"/>
    </source>
</evidence>
<keyword id="KW-0997">Cell inner membrane</keyword>
<keyword id="KW-1003">Cell membrane</keyword>
<keyword id="KW-0406">Ion transport</keyword>
<keyword id="KW-0472">Membrane</keyword>
<keyword id="KW-0520">NAD</keyword>
<keyword id="KW-0915">Sodium</keyword>
<keyword id="KW-0739">Sodium transport</keyword>
<keyword id="KW-1278">Translocase</keyword>
<keyword id="KW-0812">Transmembrane</keyword>
<keyword id="KW-1133">Transmembrane helix</keyword>
<keyword id="KW-0813">Transport</keyword>
<keyword id="KW-0830">Ubiquinone</keyword>
<proteinExistence type="inferred from homology"/>